<comment type="function">
    <text evidence="1">Component of the ubiquinol-cytochrome c oxidoreductase, a multisubunit transmembrane complex that is part of the mitochondrial electron transport chain which drives oxidative phosphorylation. The respiratory chain contains 3 multisubunit complexes succinate dehydrogenase (complex II, CII), ubiquinol-cytochrome c oxidoreductase (cytochrome b-c1 complex, complex III, CIII) and cytochrome c oxidase (complex IV, CIV), that cooperate to transfer electrons derived from NADH and succinate to molecular oxygen, creating an electrochemical gradient over the inner membrane that drives transmembrane transport and the ATP synthase. The cytochrome b-c1 complex catalyzes electron transfer from ubiquinol to cytochrome c, linking this redox reaction to translocation of protons across the mitochondrial inner membrane, with protons being carried across the membrane as hydrogens on the quinol. In the process called Q cycle, 2 protons are consumed from the matrix, 4 protons are released into the intermembrane space and 2 electrons are passed to cytochrome c.</text>
</comment>
<comment type="subunit">
    <text evidence="3 4">Component of the ubiquinol-cytochrome c oxidoreductase (cytochrome b-c1 complex, complex III, CIII), a multisubunit enzyme composed of 10 subunits. The complex is composed of 3 respiratory subunits cytochrome b (MT-CYB), cytochrome c1 (CYC1-1 or CYC1-2) and Rieske protein (UCR1-1 or UCR1-2), 2 core protein subunits MPPalpha1 (or MPPalpha2) and MPPB, and 5 low-molecular weight protein subunits QCR7-1 (or QCR7-2), UCRQ-1 (or UCRQ-2), QCR9, UCRY and probably QCR6-1 (or QCR6-2) (Probable). The complex exists as an obligatory dimer and forms supercomplexes (SCs) in the inner mitochondrial membrane with NADH-ubiquinone oxidoreductase (complex I, CI), resulting in different assemblies (supercomplexes SCI(1)III(2) and SCI(2)III(4)) (PubMed:12970493).</text>
</comment>
<comment type="subcellular location">
    <subcellularLocation>
        <location evidence="1">Mitochondrion inner membrane</location>
        <topology evidence="1">Peripheral membrane protein</topology>
        <orientation evidence="1">Intermembrane side</orientation>
    </subcellularLocation>
</comment>
<comment type="similarity">
    <text evidence="4">Belongs to the UQCRH/QCR6 family.</text>
</comment>
<comment type="sequence caution" evidence="4">
    <conflict type="erroneous gene model prediction">
        <sequence resource="EMBL-CDS" id="AAD39640"/>
    </conflict>
</comment>
<organism>
    <name type="scientific">Arabidopsis thaliana</name>
    <name type="common">Mouse-ear cress</name>
    <dbReference type="NCBI Taxonomy" id="3702"/>
    <lineage>
        <taxon>Eukaryota</taxon>
        <taxon>Viridiplantae</taxon>
        <taxon>Streptophyta</taxon>
        <taxon>Embryophyta</taxon>
        <taxon>Tracheophyta</taxon>
        <taxon>Spermatophyta</taxon>
        <taxon>Magnoliopsida</taxon>
        <taxon>eudicotyledons</taxon>
        <taxon>Gunneridae</taxon>
        <taxon>Pentapetalae</taxon>
        <taxon>rosids</taxon>
        <taxon>malvids</taxon>
        <taxon>Brassicales</taxon>
        <taxon>Brassicaceae</taxon>
        <taxon>Camelineae</taxon>
        <taxon>Arabidopsis</taxon>
    </lineage>
</organism>
<proteinExistence type="evidence at protein level"/>
<gene>
    <name type="primary">QCR6-1</name>
    <name evidence="5" type="ordered locus">At1g15120</name>
    <name evidence="6" type="ORF">F9L1.5</name>
</gene>
<accession>Q0WWE3</accession>
<accession>Q8LDP7</accession>
<accession>Q9XI58</accession>
<reference key="1">
    <citation type="journal article" date="2000" name="Nature">
        <title>Sequence and analysis of chromosome 1 of the plant Arabidopsis thaliana.</title>
        <authorList>
            <person name="Theologis A."/>
            <person name="Ecker J.R."/>
            <person name="Palm C.J."/>
            <person name="Federspiel N.A."/>
            <person name="Kaul S."/>
            <person name="White O."/>
            <person name="Alonso J."/>
            <person name="Altafi H."/>
            <person name="Araujo R."/>
            <person name="Bowman C.L."/>
            <person name="Brooks S.Y."/>
            <person name="Buehler E."/>
            <person name="Chan A."/>
            <person name="Chao Q."/>
            <person name="Chen H."/>
            <person name="Cheuk R.F."/>
            <person name="Chin C.W."/>
            <person name="Chung M.K."/>
            <person name="Conn L."/>
            <person name="Conway A.B."/>
            <person name="Conway A.R."/>
            <person name="Creasy T.H."/>
            <person name="Dewar K."/>
            <person name="Dunn P."/>
            <person name="Etgu P."/>
            <person name="Feldblyum T.V."/>
            <person name="Feng J.-D."/>
            <person name="Fong B."/>
            <person name="Fujii C.Y."/>
            <person name="Gill J.E."/>
            <person name="Goldsmith A.D."/>
            <person name="Haas B."/>
            <person name="Hansen N.F."/>
            <person name="Hughes B."/>
            <person name="Huizar L."/>
            <person name="Hunter J.L."/>
            <person name="Jenkins J."/>
            <person name="Johnson-Hopson C."/>
            <person name="Khan S."/>
            <person name="Khaykin E."/>
            <person name="Kim C.J."/>
            <person name="Koo H.L."/>
            <person name="Kremenetskaia I."/>
            <person name="Kurtz D.B."/>
            <person name="Kwan A."/>
            <person name="Lam B."/>
            <person name="Langin-Hooper S."/>
            <person name="Lee A."/>
            <person name="Lee J.M."/>
            <person name="Lenz C.A."/>
            <person name="Li J.H."/>
            <person name="Li Y.-P."/>
            <person name="Lin X."/>
            <person name="Liu S.X."/>
            <person name="Liu Z.A."/>
            <person name="Luros J.S."/>
            <person name="Maiti R."/>
            <person name="Marziali A."/>
            <person name="Militscher J."/>
            <person name="Miranda M."/>
            <person name="Nguyen M."/>
            <person name="Nierman W.C."/>
            <person name="Osborne B.I."/>
            <person name="Pai G."/>
            <person name="Peterson J."/>
            <person name="Pham P.K."/>
            <person name="Rizzo M."/>
            <person name="Rooney T."/>
            <person name="Rowley D."/>
            <person name="Sakano H."/>
            <person name="Salzberg S.L."/>
            <person name="Schwartz J.R."/>
            <person name="Shinn P."/>
            <person name="Southwick A.M."/>
            <person name="Sun H."/>
            <person name="Tallon L.J."/>
            <person name="Tambunga G."/>
            <person name="Toriumi M.J."/>
            <person name="Town C.D."/>
            <person name="Utterback T."/>
            <person name="Van Aken S."/>
            <person name="Vaysberg M."/>
            <person name="Vysotskaia V.S."/>
            <person name="Walker M."/>
            <person name="Wu D."/>
            <person name="Yu G."/>
            <person name="Fraser C.M."/>
            <person name="Venter J.C."/>
            <person name="Davis R.W."/>
        </authorList>
    </citation>
    <scope>NUCLEOTIDE SEQUENCE [LARGE SCALE GENOMIC DNA]</scope>
    <source>
        <strain>cv. Columbia</strain>
    </source>
</reference>
<reference key="2">
    <citation type="journal article" date="2017" name="Plant J.">
        <title>Araport11: a complete reannotation of the Arabidopsis thaliana reference genome.</title>
        <authorList>
            <person name="Cheng C.Y."/>
            <person name="Krishnakumar V."/>
            <person name="Chan A.P."/>
            <person name="Thibaud-Nissen F."/>
            <person name="Schobel S."/>
            <person name="Town C.D."/>
        </authorList>
    </citation>
    <scope>GENOME REANNOTATION</scope>
    <source>
        <strain>cv. Columbia</strain>
    </source>
</reference>
<reference key="3">
    <citation type="submission" date="2006-07" db="EMBL/GenBank/DDBJ databases">
        <title>Large-scale analysis of RIKEN Arabidopsis full-length (RAFL) cDNAs.</title>
        <authorList>
            <person name="Totoki Y."/>
            <person name="Seki M."/>
            <person name="Ishida J."/>
            <person name="Nakajima M."/>
            <person name="Enju A."/>
            <person name="Kamiya A."/>
            <person name="Narusaka M."/>
            <person name="Shin-i T."/>
            <person name="Nakagawa M."/>
            <person name="Sakamoto N."/>
            <person name="Oishi K."/>
            <person name="Kohara Y."/>
            <person name="Kobayashi M."/>
            <person name="Toyoda A."/>
            <person name="Sakaki Y."/>
            <person name="Sakurai T."/>
            <person name="Iida K."/>
            <person name="Akiyama K."/>
            <person name="Satou M."/>
            <person name="Toyoda T."/>
            <person name="Konagaya A."/>
            <person name="Carninci P."/>
            <person name="Kawai J."/>
            <person name="Hayashizaki Y."/>
            <person name="Shinozaki K."/>
        </authorList>
    </citation>
    <scope>NUCLEOTIDE SEQUENCE [LARGE SCALE MRNA]</scope>
    <source>
        <strain>cv. Columbia</strain>
    </source>
</reference>
<reference key="4">
    <citation type="submission" date="2006-09" db="EMBL/GenBank/DDBJ databases">
        <title>Arabidopsis ORF clones.</title>
        <authorList>
            <person name="Quinitio C."/>
            <person name="Chen H."/>
            <person name="Kim C.J."/>
            <person name="Shinn P."/>
            <person name="Ecker J.R."/>
        </authorList>
    </citation>
    <scope>NUCLEOTIDE SEQUENCE [LARGE SCALE MRNA]</scope>
    <source>
        <strain>cv. Columbia</strain>
    </source>
</reference>
<reference key="5">
    <citation type="journal article" date="2009" name="DNA Res.">
        <title>Analysis of multiple occurrences of alternative splicing events in Arabidopsis thaliana using novel sequenced full-length cDNAs.</title>
        <authorList>
            <person name="Iida K."/>
            <person name="Fukami-Kobayashi K."/>
            <person name="Toyoda A."/>
            <person name="Sakaki Y."/>
            <person name="Kobayashi M."/>
            <person name="Seki M."/>
            <person name="Shinozaki K."/>
        </authorList>
    </citation>
    <scope>NUCLEOTIDE SEQUENCE [LARGE SCALE MRNA]</scope>
    <source>
        <strain>cv. Columbia</strain>
        <tissue>Rosette leaf</tissue>
    </source>
</reference>
<reference key="6">
    <citation type="submission" date="2002-03" db="EMBL/GenBank/DDBJ databases">
        <title>Full-length cDNA from Arabidopsis thaliana.</title>
        <authorList>
            <person name="Brover V.V."/>
            <person name="Troukhan M.E."/>
            <person name="Alexandrov N.A."/>
            <person name="Lu Y.-P."/>
            <person name="Flavell R.B."/>
            <person name="Feldmann K.A."/>
        </authorList>
    </citation>
    <scope>NUCLEOTIDE SEQUENCE [LARGE SCALE MRNA]</scope>
</reference>
<reference key="7">
    <citation type="journal article" date="2003" name="Plant Physiol.">
        <title>New insights into the respiratory chain of plant mitochondria. Supercomplexes and a unique composition of complex II.</title>
        <authorList>
            <person name="Eubel H."/>
            <person name="Jansch L."/>
            <person name="Braun H.P."/>
        </authorList>
    </citation>
    <scope>SUBUNIT</scope>
</reference>
<reference key="8">
    <citation type="journal article" date="2012" name="Mol. Cell. Proteomics">
        <title>Comparative large-scale characterisation of plant vs. mammal proteins reveals similar and idiosyncratic N-alpha acetylation features.</title>
        <authorList>
            <person name="Bienvenut W.V."/>
            <person name="Sumpton D."/>
            <person name="Martinez A."/>
            <person name="Lilla S."/>
            <person name="Espagne C."/>
            <person name="Meinnel T."/>
            <person name="Giglione C."/>
        </authorList>
    </citation>
    <scope>IDENTIFICATION BY MASS SPECTROMETRY [LARGE SCALE ANALYSIS]</scope>
</reference>
<name>QCR61_ARATH</name>
<dbReference type="EMBL" id="AC007591">
    <property type="protein sequence ID" value="AAD39640.1"/>
    <property type="status" value="ALT_SEQ"/>
    <property type="molecule type" value="Genomic_DNA"/>
</dbReference>
<dbReference type="EMBL" id="CP002684">
    <property type="protein sequence ID" value="AEE29267.1"/>
    <property type="molecule type" value="Genomic_DNA"/>
</dbReference>
<dbReference type="EMBL" id="AK226409">
    <property type="protein sequence ID" value="BAE98555.1"/>
    <property type="molecule type" value="mRNA"/>
</dbReference>
<dbReference type="EMBL" id="BT028948">
    <property type="protein sequence ID" value="ABI49495.1"/>
    <property type="molecule type" value="mRNA"/>
</dbReference>
<dbReference type="EMBL" id="AK318966">
    <property type="protein sequence ID" value="BAH57081.1"/>
    <property type="molecule type" value="mRNA"/>
</dbReference>
<dbReference type="EMBL" id="AY085872">
    <property type="protein sequence ID" value="AAM63085.1"/>
    <property type="molecule type" value="mRNA"/>
</dbReference>
<dbReference type="PIR" id="H86284">
    <property type="entry name" value="H86284"/>
</dbReference>
<dbReference type="RefSeq" id="NP_172964.1">
    <property type="nucleotide sequence ID" value="NM_101380.3"/>
</dbReference>
<dbReference type="PDB" id="8BEL">
    <property type="method" value="EM"/>
    <property type="resolution" value="2.25 A"/>
    <property type="chains" value="H/R=1-69"/>
</dbReference>
<dbReference type="PDB" id="8BPX">
    <property type="method" value="EM"/>
    <property type="resolution" value="2.09 A"/>
    <property type="chains" value="AH/BH=1-69"/>
</dbReference>
<dbReference type="PDB" id="8BQ5">
    <property type="method" value="EM"/>
    <property type="resolution" value="2.73 A"/>
    <property type="chains" value="AH/BH=1-69"/>
</dbReference>
<dbReference type="PDB" id="8BQ6">
    <property type="method" value="EM"/>
    <property type="resolution" value="2.80 A"/>
    <property type="chains" value="AH/BH=1-69"/>
</dbReference>
<dbReference type="PDBsum" id="8BEL"/>
<dbReference type="PDBsum" id="8BPX"/>
<dbReference type="PDBsum" id="8BQ5"/>
<dbReference type="PDBsum" id="8BQ6"/>
<dbReference type="EMDB" id="EMD-16007"/>
<dbReference type="EMDB" id="EMD-16168"/>
<dbReference type="EMDB" id="EMD-16171"/>
<dbReference type="EMDB" id="EMD-16172"/>
<dbReference type="SMR" id="Q0WWE3"/>
<dbReference type="FunCoup" id="Q0WWE3">
    <property type="interactions" value="1519"/>
</dbReference>
<dbReference type="STRING" id="3702.Q0WWE3"/>
<dbReference type="PaxDb" id="3702-AT1G15120.2"/>
<dbReference type="ProteomicsDB" id="191872"/>
<dbReference type="EnsemblPlants" id="AT1G15120.1">
    <property type="protein sequence ID" value="AT1G15120.1"/>
    <property type="gene ID" value="AT1G15120"/>
</dbReference>
<dbReference type="GeneID" id="838075"/>
<dbReference type="Gramene" id="AT1G15120.1">
    <property type="protein sequence ID" value="AT1G15120.1"/>
    <property type="gene ID" value="AT1G15120"/>
</dbReference>
<dbReference type="KEGG" id="ath:AT1G15120"/>
<dbReference type="Araport" id="AT1G15120"/>
<dbReference type="TAIR" id="AT1G15120"/>
<dbReference type="HOGENOM" id="CLU_115913_2_1_1"/>
<dbReference type="InParanoid" id="Q0WWE3"/>
<dbReference type="OMA" id="AKPEMKG"/>
<dbReference type="PhylomeDB" id="Q0WWE3"/>
<dbReference type="PRO" id="PR:Q0WWE3"/>
<dbReference type="Proteomes" id="UP000006548">
    <property type="component" value="Chromosome 1"/>
</dbReference>
<dbReference type="ExpressionAtlas" id="Q0WWE3">
    <property type="expression patterns" value="baseline and differential"/>
</dbReference>
<dbReference type="GO" id="GO:0005743">
    <property type="term" value="C:mitochondrial inner membrane"/>
    <property type="evidence" value="ECO:0007669"/>
    <property type="project" value="UniProtKB-SubCell"/>
</dbReference>
<dbReference type="GO" id="GO:0006122">
    <property type="term" value="P:mitochondrial electron transport, ubiquinol to cytochrome c"/>
    <property type="evidence" value="ECO:0007669"/>
    <property type="project" value="InterPro"/>
</dbReference>
<dbReference type="FunFam" id="1.10.287.20:FF:000001">
    <property type="entry name" value="Cytochrome b-c1 complex subunit 6"/>
    <property type="match status" value="1"/>
</dbReference>
<dbReference type="Gene3D" id="1.10.287.20">
    <property type="entry name" value="Ubiquinol-cytochrome C reductase hinge domain"/>
    <property type="match status" value="1"/>
</dbReference>
<dbReference type="InterPro" id="IPR003422">
    <property type="entry name" value="Cyt_b-c1_6"/>
</dbReference>
<dbReference type="InterPro" id="IPR023184">
    <property type="entry name" value="Ubol_cytC_Rdtase_hinge_dom"/>
</dbReference>
<dbReference type="InterPro" id="IPR036811">
    <property type="entry name" value="Ubol_cytC_Rdtase_hinge_dom_sf"/>
</dbReference>
<dbReference type="PANTHER" id="PTHR15336:SF18">
    <property type="entry name" value="CYTOCHROME B-C1 COMPLEX SUBUNIT 6-1, MITOCHONDRIAL"/>
    <property type="match status" value="1"/>
</dbReference>
<dbReference type="PANTHER" id="PTHR15336">
    <property type="entry name" value="UBIQUINOL-CYTOCHROME C REDUCTASE COMPLEX 7.8 KDA PROTEIN"/>
    <property type="match status" value="1"/>
</dbReference>
<dbReference type="Pfam" id="PF02320">
    <property type="entry name" value="UCR_hinge"/>
    <property type="match status" value="1"/>
</dbReference>
<dbReference type="PIRSF" id="PIRSF000019">
    <property type="entry name" value="Bc1_11K"/>
    <property type="match status" value="1"/>
</dbReference>
<dbReference type="SUPFAM" id="SSF81531">
    <property type="entry name" value="Non-heme 11 kDa protein of cytochrome bc1 complex (Ubiquinol-cytochrome c reductase)"/>
    <property type="match status" value="1"/>
</dbReference>
<sequence length="69" mass="7983">MADDEVVDPKKYLEESCKPKCVKPLLEYQACVKRIQGDDSGHKHCTGQYFDYWQCIDKCVAPKLFAKLK</sequence>
<evidence type="ECO:0000250" key="1">
    <source>
        <dbReference type="UniProtKB" id="P00127"/>
    </source>
</evidence>
<evidence type="ECO:0000255" key="2">
    <source>
        <dbReference type="PIRSR" id="PIRSR000019-1"/>
    </source>
</evidence>
<evidence type="ECO:0000269" key="3">
    <source>
    </source>
</evidence>
<evidence type="ECO:0000305" key="4"/>
<evidence type="ECO:0000312" key="5">
    <source>
        <dbReference type="Araport" id="AT1G15120"/>
    </source>
</evidence>
<evidence type="ECO:0000312" key="6">
    <source>
        <dbReference type="EMBL" id="AAD39640.1"/>
    </source>
</evidence>
<evidence type="ECO:0007829" key="7">
    <source>
        <dbReference type="PDB" id="8BEL"/>
    </source>
</evidence>
<protein>
    <recommendedName>
        <fullName>Cytochrome b-c1 complex subunit 6-1, mitochondrial</fullName>
    </recommendedName>
    <alternativeName>
        <fullName>Complex III subunit 6-1</fullName>
    </alternativeName>
    <alternativeName>
        <fullName>Complex III subunit VI</fullName>
    </alternativeName>
    <alternativeName>
        <fullName>Mitochondrial hinge protein</fullName>
    </alternativeName>
    <alternativeName>
        <fullName>Ubiquinol-cytochrome c oxidoreductase subunit 6-1</fullName>
    </alternativeName>
</protein>
<keyword id="KW-0002">3D-structure</keyword>
<keyword id="KW-1015">Disulfide bond</keyword>
<keyword id="KW-0249">Electron transport</keyword>
<keyword id="KW-0472">Membrane</keyword>
<keyword id="KW-0496">Mitochondrion</keyword>
<keyword id="KW-0999">Mitochondrion inner membrane</keyword>
<keyword id="KW-1185">Reference proteome</keyword>
<keyword id="KW-0679">Respiratory chain</keyword>
<keyword id="KW-0813">Transport</keyword>
<feature type="chain" id="PRO_0000449256" description="Cytochrome b-c1 complex subunit 6-1, mitochondrial">
    <location>
        <begin position="1"/>
        <end position="69"/>
    </location>
</feature>
<feature type="disulfide bond" evidence="2">
    <location>
        <begin position="17"/>
        <end position="59"/>
    </location>
</feature>
<feature type="disulfide bond" evidence="2">
    <location>
        <begin position="31"/>
        <end position="45"/>
    </location>
</feature>
<feature type="sequence conflict" description="In Ref. 6; AAM63085." evidence="4" ref="6">
    <original>G</original>
    <variation>S</variation>
    <location>
        <position position="37"/>
    </location>
</feature>
<feature type="helix" evidence="7">
    <location>
        <begin position="9"/>
        <end position="16"/>
    </location>
</feature>
<feature type="helix" evidence="7">
    <location>
        <begin position="18"/>
        <end position="20"/>
    </location>
</feature>
<feature type="helix" evidence="7">
    <location>
        <begin position="22"/>
        <end position="35"/>
    </location>
</feature>
<feature type="turn" evidence="7">
    <location>
        <begin position="39"/>
        <end position="42"/>
    </location>
</feature>
<feature type="helix" evidence="7">
    <location>
        <begin position="46"/>
        <end position="64"/>
    </location>
</feature>